<name>DCHS_PSEFL</name>
<dbReference type="EC" id="4.1.1.22" evidence="1"/>
<dbReference type="EMBL" id="Y09356">
    <property type="protein sequence ID" value="CAA70530.1"/>
    <property type="molecule type" value="Genomic_DNA"/>
</dbReference>
<dbReference type="SMR" id="P95477"/>
<dbReference type="BRENDA" id="4.1.1.22">
    <property type="organism ID" value="5121"/>
</dbReference>
<dbReference type="UniPathway" id="UPA00024"/>
<dbReference type="GO" id="GO:0004398">
    <property type="term" value="F:histidine decarboxylase activity"/>
    <property type="evidence" value="ECO:0007669"/>
    <property type="project" value="UniProtKB-UniRule"/>
</dbReference>
<dbReference type="GO" id="GO:0030170">
    <property type="term" value="F:pyridoxal phosphate binding"/>
    <property type="evidence" value="ECO:0007669"/>
    <property type="project" value="InterPro"/>
</dbReference>
<dbReference type="GO" id="GO:0019752">
    <property type="term" value="P:carboxylic acid metabolic process"/>
    <property type="evidence" value="ECO:0007669"/>
    <property type="project" value="InterPro"/>
</dbReference>
<dbReference type="Gene3D" id="3.40.640.10">
    <property type="entry name" value="Type I PLP-dependent aspartate aminotransferase-like (Major domain)"/>
    <property type="match status" value="1"/>
</dbReference>
<dbReference type="HAMAP" id="MF_00609">
    <property type="entry name" value="Pyridoxal_decarbox"/>
    <property type="match status" value="1"/>
</dbReference>
<dbReference type="InterPro" id="IPR051151">
    <property type="entry name" value="Group_II_Decarboxylase"/>
</dbReference>
<dbReference type="InterPro" id="IPR023523">
    <property type="entry name" value="Hist_deCOase_bac"/>
</dbReference>
<dbReference type="InterPro" id="IPR002129">
    <property type="entry name" value="PyrdxlP-dep_de-COase"/>
</dbReference>
<dbReference type="InterPro" id="IPR015424">
    <property type="entry name" value="PyrdxlP-dep_Trfase"/>
</dbReference>
<dbReference type="InterPro" id="IPR015421">
    <property type="entry name" value="PyrdxlP-dep_Trfase_major"/>
</dbReference>
<dbReference type="InterPro" id="IPR021115">
    <property type="entry name" value="Pyridoxal-P_BS"/>
</dbReference>
<dbReference type="NCBIfam" id="NF002748">
    <property type="entry name" value="PRK02769.1"/>
    <property type="match status" value="1"/>
</dbReference>
<dbReference type="PANTHER" id="PTHR46101">
    <property type="match status" value="1"/>
</dbReference>
<dbReference type="PANTHER" id="PTHR46101:SF2">
    <property type="entry name" value="SERINE DECARBOXYLASE"/>
    <property type="match status" value="1"/>
</dbReference>
<dbReference type="Pfam" id="PF00282">
    <property type="entry name" value="Pyridoxal_deC"/>
    <property type="match status" value="1"/>
</dbReference>
<dbReference type="SUPFAM" id="SSF53383">
    <property type="entry name" value="PLP-dependent transferases"/>
    <property type="match status" value="1"/>
</dbReference>
<dbReference type="PROSITE" id="PS00392">
    <property type="entry name" value="DDC_GAD_HDC_YDC"/>
    <property type="match status" value="1"/>
</dbReference>
<gene>
    <name evidence="1" type="primary">hdc</name>
    <name type="synonym">pmsA</name>
</gene>
<proteinExistence type="inferred from homology"/>
<reference key="1">
    <citation type="journal article" date="2001" name="J. Bacteriol.">
        <title>Analysis of the pmsCEAB gene cluster involved in biosynthesis of salicylic acid and the siderophore pseudomonine in the biocontrol strain Pseudomonas fluorescens WCS374.</title>
        <authorList>
            <person name="Mercado-Blanco J."/>
            <person name="van der Drift K.M.G.M."/>
            <person name="Olsson P.E."/>
            <person name="Thomas-Oates J.E."/>
            <person name="Van Loon L.C."/>
            <person name="Bakker P.A.H.M."/>
        </authorList>
    </citation>
    <scope>NUCLEOTIDE SEQUENCE [GENOMIC DNA]</scope>
    <source>
        <strain>WCS374</strain>
    </source>
</reference>
<feature type="chain" id="PRO_0000146959" description="Histidine decarboxylase">
    <location>
        <begin position="1"/>
        <end position="405"/>
    </location>
</feature>
<feature type="binding site" evidence="1">
    <location>
        <position position="121"/>
    </location>
    <ligand>
        <name>substrate</name>
    </ligand>
</feature>
<feature type="modified residue" description="N6-(pyridoxal phosphate)lysine" evidence="1">
    <location>
        <position position="234"/>
    </location>
</feature>
<evidence type="ECO:0000255" key="1">
    <source>
        <dbReference type="HAMAP-Rule" id="MF_00609"/>
    </source>
</evidence>
<keyword id="KW-0210">Decarboxylase</keyword>
<keyword id="KW-0456">Lyase</keyword>
<keyword id="KW-0663">Pyridoxal phosphate</keyword>
<protein>
    <recommendedName>
        <fullName evidence="1">Histidine decarboxylase</fullName>
        <shortName evidence="1">HDC</shortName>
        <ecNumber evidence="1">4.1.1.22</ecNumber>
    </recommendedName>
</protein>
<organism>
    <name type="scientific">Pseudomonas fluorescens</name>
    <dbReference type="NCBI Taxonomy" id="294"/>
    <lineage>
        <taxon>Bacteria</taxon>
        <taxon>Pseudomonadati</taxon>
        <taxon>Pseudomonadota</taxon>
        <taxon>Gammaproteobacteria</taxon>
        <taxon>Pseudomonadales</taxon>
        <taxon>Pseudomonadaceae</taxon>
        <taxon>Pseudomonas</taxon>
    </lineage>
</organism>
<comment type="catalytic activity">
    <reaction evidence="1">
        <text>L-histidine + H(+) = histamine + CO2</text>
        <dbReference type="Rhea" id="RHEA:20840"/>
        <dbReference type="ChEBI" id="CHEBI:15378"/>
        <dbReference type="ChEBI" id="CHEBI:16526"/>
        <dbReference type="ChEBI" id="CHEBI:57595"/>
        <dbReference type="ChEBI" id="CHEBI:58432"/>
        <dbReference type="EC" id="4.1.1.22"/>
    </reaction>
</comment>
<comment type="cofactor">
    <cofactor evidence="1">
        <name>pyridoxal 5'-phosphate</name>
        <dbReference type="ChEBI" id="CHEBI:597326"/>
    </cofactor>
</comment>
<comment type="pathway">
    <text>Siderophore biosynthesis; pseudomonine biosynthesis.</text>
</comment>
<comment type="subunit">
    <text evidence="1">Homotetramer.</text>
</comment>
<comment type="similarity">
    <text evidence="1">Belongs to the group II decarboxylase family.</text>
</comment>
<accession>P95477</accession>
<sequence>MTLSPADQSKLEGFWQHCVTHQYFNIGYPESADFDYSQLHRFLQFSINNLLGTGNEYSNYLLNSFDFEKDVMTYFAELFNIALEDSWGYVTNGGTEGNMFGCYLGRELFPDGTLYYSKDTHYSVAKIVKLLRIKCRAVESLPNGEIDYDDLMAKITADQERHPIIFANIGTTMRGALDNIVTIQQRLQQAGIARHDYYLHADAALSGMILPFVDHPQPFSFADGIDSICVSGHKMIGSPIPCGIVVAKRNNVARISVEVDYIRAHDKTISGSRNGHTPLMMWAALRSYSWAEWRHRIKHSLDTAQYAVDRFQASGIDAWRNENSITVVFPCPSERIATKYCLATSGNSAHLITTPHHHDCSMIDALIDEVVAEAQLNTLRSKRAFTEQTVVERLPAASFNLRTHY</sequence>